<evidence type="ECO:0000250" key="1">
    <source>
        <dbReference type="UniProtKB" id="P49915"/>
    </source>
</evidence>
<evidence type="ECO:0000250" key="2">
    <source>
        <dbReference type="UniProtKB" id="Q4V7C6"/>
    </source>
</evidence>
<evidence type="ECO:0000255" key="3">
    <source>
        <dbReference type="PROSITE-ProRule" id="PRU00605"/>
    </source>
</evidence>
<evidence type="ECO:0000255" key="4">
    <source>
        <dbReference type="PROSITE-ProRule" id="PRU00886"/>
    </source>
</evidence>
<accession>Q5RA96</accession>
<name>GUAA_PONAB</name>
<reference key="1">
    <citation type="submission" date="2004-11" db="EMBL/GenBank/DDBJ databases">
        <authorList>
            <consortium name="The German cDNA consortium"/>
        </authorList>
    </citation>
    <scope>NUCLEOTIDE SEQUENCE [LARGE SCALE MRNA]</scope>
    <source>
        <tissue>Brain cortex</tissue>
    </source>
</reference>
<sequence>MALCNGDSKLENAGGDLKDGRHHYEGAVVILDAGAQYGKVIDRRVRELFVQSEIFPLETPAFAIKEQGFRAIIISGGPNSVYAEDAPWFDPAIFTIGKPVLGICYGMQMMNKVFGGTVHKKSVREDGVFNISVDNTCSLFRGLQKEEVVLLTHGDSVDKVADGFKVVARSGNIVAGIANESKKLYGAQFHPEVGLTENGKVILKNFLYDIAGCSGTFTVQNRELECIREIKERVGTSKVLVLLSGGVDSTVCTALLNRALNQEQVIAVHIDNGFMRKRESQSVEEALKKLGIQVKVINAAHSFYNGTTTLPISDEDRTPRKRISKTLNMTTSPEEKRKIIGDTFVKIANEVIGEMSLKPEEVFLAQGTLRPDLIESASLVASGKAELIKTHHNDTELIRKLREEGKVIEPLKDFHKDEVRILGRELGLPEELVSRHPFPGPGLAIRVICAEEPYICKDFPETSNILKIVADFSASVKKPHTLLQRVKACTTEEDQEKLMQITSLHSLNAFLLPIKTVGVQGDCRSYSYVCGISSKDEPDWESLIFLARLIPRMCHNVNRVVYIFGPPVKEPPTDVTPTFLTTGVLSTLRQADFEAHNILRESGYAGKISQMPVILTPLHFDRDPLQKQPSCQRSVVIRTFITSDFMTGIPATPGNEIPVEVVLKMVTEIKKIPGISRIMYDLTSKPPGTTEWE</sequence>
<feature type="initiator methionine" description="Removed" evidence="1">
    <location>
        <position position="1"/>
    </location>
</feature>
<feature type="chain" id="PRO_0000284366" description="GMP synthase [glutamine-hydrolyzing]">
    <location>
        <begin position="2"/>
        <end position="693"/>
    </location>
</feature>
<feature type="domain" description="Glutamine amidotransferase type-1" evidence="3">
    <location>
        <begin position="27"/>
        <end position="216"/>
    </location>
</feature>
<feature type="domain" description="GMPS ATP-PPase" evidence="4">
    <location>
        <begin position="217"/>
        <end position="435"/>
    </location>
</feature>
<feature type="active site" description="For GATase activity" evidence="3">
    <location>
        <position position="104"/>
    </location>
</feature>
<feature type="active site" description="For GATase activity" evidence="3">
    <location>
        <position position="190"/>
    </location>
</feature>
<feature type="active site" description="For GATase activity" evidence="3">
    <location>
        <position position="192"/>
    </location>
</feature>
<feature type="binding site" evidence="4">
    <location>
        <begin position="244"/>
        <end position="250"/>
    </location>
    <ligand>
        <name>ATP</name>
        <dbReference type="ChEBI" id="CHEBI:30616"/>
    </ligand>
</feature>
<feature type="binding site" evidence="1">
    <location>
        <position position="337"/>
    </location>
    <ligand>
        <name>XMP</name>
        <dbReference type="ChEBI" id="CHEBI:57464"/>
    </ligand>
</feature>
<feature type="binding site" evidence="1">
    <location>
        <position position="522"/>
    </location>
    <ligand>
        <name>XMP</name>
        <dbReference type="ChEBI" id="CHEBI:57464"/>
    </ligand>
</feature>
<feature type="binding site" evidence="1">
    <location>
        <position position="610"/>
    </location>
    <ligand>
        <name>XMP</name>
        <dbReference type="ChEBI" id="CHEBI:57464"/>
    </ligand>
</feature>
<feature type="binding site" evidence="1">
    <location>
        <position position="685"/>
    </location>
    <ligand>
        <name>XMP</name>
        <dbReference type="ChEBI" id="CHEBI:57464"/>
    </ligand>
</feature>
<feature type="binding site" evidence="1">
    <location>
        <position position="691"/>
    </location>
    <ligand>
        <name>XMP</name>
        <dbReference type="ChEBI" id="CHEBI:57464"/>
    </ligand>
</feature>
<feature type="modified residue" description="N-acetylalanine" evidence="1">
    <location>
        <position position="2"/>
    </location>
</feature>
<feature type="modified residue" description="Phosphoserine" evidence="1">
    <location>
        <position position="8"/>
    </location>
</feature>
<feature type="modified residue" description="N6-acetyllysine" evidence="1">
    <location>
        <position position="9"/>
    </location>
</feature>
<feature type="modified residue" description="Phosphothreonine" evidence="1">
    <location>
        <position position="318"/>
    </location>
</feature>
<feature type="modified residue" description="Phosphoserine" evidence="1">
    <location>
        <position position="332"/>
    </location>
</feature>
<comment type="function">
    <text evidence="1">Catalyzes the conversion of xanthine monophosphate (XMP) to GMP in the presence of glutamine and ATP through an adenyl-XMP intermediate.</text>
</comment>
<comment type="catalytic activity">
    <reaction evidence="1">
        <text>XMP + L-glutamine + ATP + H2O = GMP + L-glutamate + AMP + diphosphate + 2 H(+)</text>
        <dbReference type="Rhea" id="RHEA:11680"/>
        <dbReference type="ChEBI" id="CHEBI:15377"/>
        <dbReference type="ChEBI" id="CHEBI:15378"/>
        <dbReference type="ChEBI" id="CHEBI:29985"/>
        <dbReference type="ChEBI" id="CHEBI:30616"/>
        <dbReference type="ChEBI" id="CHEBI:33019"/>
        <dbReference type="ChEBI" id="CHEBI:57464"/>
        <dbReference type="ChEBI" id="CHEBI:58115"/>
        <dbReference type="ChEBI" id="CHEBI:58359"/>
        <dbReference type="ChEBI" id="CHEBI:456215"/>
        <dbReference type="EC" id="6.3.5.2"/>
    </reaction>
    <physiologicalReaction direction="left-to-right" evidence="1">
        <dbReference type="Rhea" id="RHEA:11681"/>
    </physiologicalReaction>
</comment>
<comment type="cofactor">
    <cofactor evidence="2">
        <name>Mg(2+)</name>
        <dbReference type="ChEBI" id="CHEBI:18420"/>
    </cofactor>
</comment>
<comment type="pathway">
    <text>Purine metabolism; GMP biosynthesis; GMP from XMP (L-Gln route): step 1/1.</text>
</comment>
<comment type="subunit">
    <text evidence="1">Homodimer.</text>
</comment>
<comment type="subcellular location">
    <subcellularLocation>
        <location evidence="1">Cytoplasm</location>
        <location evidence="1">Cytosol</location>
    </subcellularLocation>
</comment>
<proteinExistence type="evidence at transcript level"/>
<protein>
    <recommendedName>
        <fullName>GMP synthase [glutamine-hydrolyzing]</fullName>
        <ecNumber evidence="1">6.3.5.2</ecNumber>
    </recommendedName>
    <alternativeName>
        <fullName>GMP synthetase</fullName>
    </alternativeName>
    <alternativeName>
        <fullName>Glutamine amidotransferase</fullName>
    </alternativeName>
</protein>
<organism>
    <name type="scientific">Pongo abelii</name>
    <name type="common">Sumatran orangutan</name>
    <name type="synonym">Pongo pygmaeus abelii</name>
    <dbReference type="NCBI Taxonomy" id="9601"/>
    <lineage>
        <taxon>Eukaryota</taxon>
        <taxon>Metazoa</taxon>
        <taxon>Chordata</taxon>
        <taxon>Craniata</taxon>
        <taxon>Vertebrata</taxon>
        <taxon>Euteleostomi</taxon>
        <taxon>Mammalia</taxon>
        <taxon>Eutheria</taxon>
        <taxon>Euarchontoglires</taxon>
        <taxon>Primates</taxon>
        <taxon>Haplorrhini</taxon>
        <taxon>Catarrhini</taxon>
        <taxon>Hominidae</taxon>
        <taxon>Pongo</taxon>
    </lineage>
</organism>
<keyword id="KW-0007">Acetylation</keyword>
<keyword id="KW-0067">ATP-binding</keyword>
<keyword id="KW-0963">Cytoplasm</keyword>
<keyword id="KW-0315">Glutamine amidotransferase</keyword>
<keyword id="KW-0332">GMP biosynthesis</keyword>
<keyword id="KW-0436">Ligase</keyword>
<keyword id="KW-0547">Nucleotide-binding</keyword>
<keyword id="KW-0597">Phosphoprotein</keyword>
<keyword id="KW-0658">Purine biosynthesis</keyword>
<keyword id="KW-1185">Reference proteome</keyword>
<dbReference type="EC" id="6.3.5.2" evidence="1"/>
<dbReference type="EMBL" id="CR859122">
    <property type="protein sequence ID" value="CAH91314.1"/>
    <property type="molecule type" value="mRNA"/>
</dbReference>
<dbReference type="RefSeq" id="NP_001124563.1">
    <property type="nucleotide sequence ID" value="NM_001131091.1"/>
</dbReference>
<dbReference type="SMR" id="Q5RA96"/>
<dbReference type="FunCoup" id="Q5RA96">
    <property type="interactions" value="2510"/>
</dbReference>
<dbReference type="STRING" id="9601.ENSPPYP00000015909"/>
<dbReference type="GeneID" id="100169736"/>
<dbReference type="KEGG" id="pon:100169736"/>
<dbReference type="CTD" id="8833"/>
<dbReference type="eggNOG" id="KOG1622">
    <property type="taxonomic scope" value="Eukaryota"/>
</dbReference>
<dbReference type="InParanoid" id="Q5RA96"/>
<dbReference type="OrthoDB" id="1724632at2759"/>
<dbReference type="UniPathway" id="UPA00189">
    <property type="reaction ID" value="UER00296"/>
</dbReference>
<dbReference type="Proteomes" id="UP000001595">
    <property type="component" value="Unplaced"/>
</dbReference>
<dbReference type="GO" id="GO:0005829">
    <property type="term" value="C:cytosol"/>
    <property type="evidence" value="ECO:0000250"/>
    <property type="project" value="UniProtKB"/>
</dbReference>
<dbReference type="GO" id="GO:0005524">
    <property type="term" value="F:ATP binding"/>
    <property type="evidence" value="ECO:0007669"/>
    <property type="project" value="UniProtKB-KW"/>
</dbReference>
<dbReference type="GO" id="GO:0003922">
    <property type="term" value="F:GMP synthase (glutamine-hydrolyzing) activity"/>
    <property type="evidence" value="ECO:0000250"/>
    <property type="project" value="UniProtKB"/>
</dbReference>
<dbReference type="GO" id="GO:0003921">
    <property type="term" value="F:GMP synthase activity"/>
    <property type="evidence" value="ECO:0007669"/>
    <property type="project" value="InterPro"/>
</dbReference>
<dbReference type="CDD" id="cd01742">
    <property type="entry name" value="GATase1_GMP_Synthase"/>
    <property type="match status" value="1"/>
</dbReference>
<dbReference type="CDD" id="cd01997">
    <property type="entry name" value="GMP_synthase_C"/>
    <property type="match status" value="1"/>
</dbReference>
<dbReference type="FunFam" id="3.30.300.10:FF:000008">
    <property type="entry name" value="GMP synthase [glutamine-hydrolyzing]"/>
    <property type="match status" value="1"/>
</dbReference>
<dbReference type="FunFam" id="3.30.300.10:FF:000009">
    <property type="entry name" value="GMP synthase [glutamine-hydrolyzing]"/>
    <property type="match status" value="1"/>
</dbReference>
<dbReference type="FunFam" id="3.40.50.620:FF:000044">
    <property type="entry name" value="GMP synthase [glutamine-hydrolyzing]"/>
    <property type="match status" value="1"/>
</dbReference>
<dbReference type="FunFam" id="3.40.50.880:FF:000013">
    <property type="entry name" value="GMP synthase [glutamine-hydrolyzing]"/>
    <property type="match status" value="1"/>
</dbReference>
<dbReference type="Gene3D" id="3.30.300.10">
    <property type="match status" value="2"/>
</dbReference>
<dbReference type="Gene3D" id="3.40.50.880">
    <property type="match status" value="1"/>
</dbReference>
<dbReference type="Gene3D" id="3.40.50.620">
    <property type="entry name" value="HUPs"/>
    <property type="match status" value="1"/>
</dbReference>
<dbReference type="InterPro" id="IPR029062">
    <property type="entry name" value="Class_I_gatase-like"/>
</dbReference>
<dbReference type="InterPro" id="IPR017926">
    <property type="entry name" value="GATASE"/>
</dbReference>
<dbReference type="InterPro" id="IPR001674">
    <property type="entry name" value="GMP_synth_C"/>
</dbReference>
<dbReference type="InterPro" id="IPR004739">
    <property type="entry name" value="GMP_synth_GATase"/>
</dbReference>
<dbReference type="InterPro" id="IPR025777">
    <property type="entry name" value="GMPS_ATP_PPase_dom"/>
</dbReference>
<dbReference type="InterPro" id="IPR022310">
    <property type="entry name" value="NAD/GMP_synthase"/>
</dbReference>
<dbReference type="InterPro" id="IPR014729">
    <property type="entry name" value="Rossmann-like_a/b/a_fold"/>
</dbReference>
<dbReference type="NCBIfam" id="TIGR00888">
    <property type="entry name" value="guaA_Nterm"/>
    <property type="match status" value="1"/>
</dbReference>
<dbReference type="NCBIfam" id="NF000848">
    <property type="entry name" value="PRK00074.1"/>
    <property type="match status" value="1"/>
</dbReference>
<dbReference type="PANTHER" id="PTHR11922:SF2">
    <property type="entry name" value="GMP SYNTHASE [GLUTAMINE-HYDROLYZING]"/>
    <property type="match status" value="1"/>
</dbReference>
<dbReference type="PANTHER" id="PTHR11922">
    <property type="entry name" value="GMP SYNTHASE-RELATED"/>
    <property type="match status" value="1"/>
</dbReference>
<dbReference type="Pfam" id="PF00117">
    <property type="entry name" value="GATase"/>
    <property type="match status" value="1"/>
</dbReference>
<dbReference type="Pfam" id="PF00958">
    <property type="entry name" value="GMP_synt_C"/>
    <property type="match status" value="1"/>
</dbReference>
<dbReference type="Pfam" id="PF02540">
    <property type="entry name" value="NAD_synthase"/>
    <property type="match status" value="1"/>
</dbReference>
<dbReference type="PRINTS" id="PR00097">
    <property type="entry name" value="ANTSNTHASEII"/>
</dbReference>
<dbReference type="PRINTS" id="PR00096">
    <property type="entry name" value="GATASE"/>
</dbReference>
<dbReference type="SUPFAM" id="SSF52402">
    <property type="entry name" value="Adenine nucleotide alpha hydrolases-like"/>
    <property type="match status" value="1"/>
</dbReference>
<dbReference type="SUPFAM" id="SSF52317">
    <property type="entry name" value="Class I glutamine amidotransferase-like"/>
    <property type="match status" value="1"/>
</dbReference>
<dbReference type="SUPFAM" id="SSF54810">
    <property type="entry name" value="GMP synthetase C-terminal dimerisation domain"/>
    <property type="match status" value="2"/>
</dbReference>
<dbReference type="PROSITE" id="PS51273">
    <property type="entry name" value="GATASE_TYPE_1"/>
    <property type="match status" value="1"/>
</dbReference>
<dbReference type="PROSITE" id="PS51553">
    <property type="entry name" value="GMPS_ATP_PPASE"/>
    <property type="match status" value="1"/>
</dbReference>
<gene>
    <name type="primary">GMPS</name>
</gene>